<proteinExistence type="inferred from homology"/>
<organism>
    <name type="scientific">Cereibacter sphaeroides (strain ATCC 17023 / DSM 158 / JCM 6121 / CCUG 31486 / LMG 2827 / NBRC 12203 / NCIMB 8253 / ATH 2.4.1.)</name>
    <name type="common">Rhodobacter sphaeroides</name>
    <dbReference type="NCBI Taxonomy" id="272943"/>
    <lineage>
        <taxon>Bacteria</taxon>
        <taxon>Pseudomonadati</taxon>
        <taxon>Pseudomonadota</taxon>
        <taxon>Alphaproteobacteria</taxon>
        <taxon>Rhodobacterales</taxon>
        <taxon>Paracoccaceae</taxon>
        <taxon>Cereibacter</taxon>
    </lineage>
</organism>
<evidence type="ECO:0000250" key="1"/>
<evidence type="ECO:0000255" key="2">
    <source>
        <dbReference type="HAMAP-Rule" id="MF_00403"/>
    </source>
</evidence>
<evidence type="ECO:0000256" key="3">
    <source>
        <dbReference type="SAM" id="MobiDB-lite"/>
    </source>
</evidence>
<evidence type="ECO:0000305" key="4"/>
<gene>
    <name evidence="2" type="primary">rpsL</name>
    <name type="ordered locus">RHOS4_02890</name>
    <name type="ORF">RSP_1710</name>
</gene>
<protein>
    <recommendedName>
        <fullName evidence="2">Small ribosomal subunit protein uS12</fullName>
    </recommendedName>
    <alternativeName>
        <fullName evidence="4">30S ribosomal protein S12</fullName>
    </alternativeName>
</protein>
<dbReference type="EMBL" id="CP000143">
    <property type="protein sequence ID" value="ABA77857.1"/>
    <property type="molecule type" value="Genomic_DNA"/>
</dbReference>
<dbReference type="RefSeq" id="WP_002722481.1">
    <property type="nucleotide sequence ID" value="NZ_CP030271.1"/>
</dbReference>
<dbReference type="RefSeq" id="YP_351758.1">
    <property type="nucleotide sequence ID" value="NC_007493.2"/>
</dbReference>
<dbReference type="SMR" id="Q3J5S7"/>
<dbReference type="STRING" id="272943.RSP_1710"/>
<dbReference type="EnsemblBacteria" id="ABA77857">
    <property type="protein sequence ID" value="ABA77857"/>
    <property type="gene ID" value="RSP_1710"/>
</dbReference>
<dbReference type="GeneID" id="3718916"/>
<dbReference type="KEGG" id="rsp:RSP_1710"/>
<dbReference type="PATRIC" id="fig|272943.9.peg.588"/>
<dbReference type="eggNOG" id="COG0048">
    <property type="taxonomic scope" value="Bacteria"/>
</dbReference>
<dbReference type="OrthoDB" id="9802366at2"/>
<dbReference type="PhylomeDB" id="Q3J5S7"/>
<dbReference type="Proteomes" id="UP000002703">
    <property type="component" value="Chromosome 1"/>
</dbReference>
<dbReference type="GO" id="GO:0015935">
    <property type="term" value="C:small ribosomal subunit"/>
    <property type="evidence" value="ECO:0007669"/>
    <property type="project" value="InterPro"/>
</dbReference>
<dbReference type="GO" id="GO:0019843">
    <property type="term" value="F:rRNA binding"/>
    <property type="evidence" value="ECO:0007669"/>
    <property type="project" value="UniProtKB-UniRule"/>
</dbReference>
<dbReference type="GO" id="GO:0003735">
    <property type="term" value="F:structural constituent of ribosome"/>
    <property type="evidence" value="ECO:0007669"/>
    <property type="project" value="InterPro"/>
</dbReference>
<dbReference type="GO" id="GO:0000049">
    <property type="term" value="F:tRNA binding"/>
    <property type="evidence" value="ECO:0007669"/>
    <property type="project" value="UniProtKB-UniRule"/>
</dbReference>
<dbReference type="GO" id="GO:0006412">
    <property type="term" value="P:translation"/>
    <property type="evidence" value="ECO:0007669"/>
    <property type="project" value="UniProtKB-UniRule"/>
</dbReference>
<dbReference type="CDD" id="cd03368">
    <property type="entry name" value="Ribosomal_S12"/>
    <property type="match status" value="1"/>
</dbReference>
<dbReference type="FunFam" id="2.40.50.140:FF:000001">
    <property type="entry name" value="30S ribosomal protein S12"/>
    <property type="match status" value="1"/>
</dbReference>
<dbReference type="Gene3D" id="2.40.50.140">
    <property type="entry name" value="Nucleic acid-binding proteins"/>
    <property type="match status" value="1"/>
</dbReference>
<dbReference type="HAMAP" id="MF_00403_B">
    <property type="entry name" value="Ribosomal_uS12_B"/>
    <property type="match status" value="1"/>
</dbReference>
<dbReference type="InterPro" id="IPR012340">
    <property type="entry name" value="NA-bd_OB-fold"/>
</dbReference>
<dbReference type="InterPro" id="IPR006032">
    <property type="entry name" value="Ribosomal_uS12"/>
</dbReference>
<dbReference type="InterPro" id="IPR005679">
    <property type="entry name" value="Ribosomal_uS12_bac"/>
</dbReference>
<dbReference type="NCBIfam" id="TIGR00981">
    <property type="entry name" value="rpsL_bact"/>
    <property type="match status" value="1"/>
</dbReference>
<dbReference type="PANTHER" id="PTHR11652">
    <property type="entry name" value="30S RIBOSOMAL PROTEIN S12 FAMILY MEMBER"/>
    <property type="match status" value="1"/>
</dbReference>
<dbReference type="Pfam" id="PF00164">
    <property type="entry name" value="Ribosom_S12_S23"/>
    <property type="match status" value="1"/>
</dbReference>
<dbReference type="PIRSF" id="PIRSF002133">
    <property type="entry name" value="Ribosomal_S12/S23"/>
    <property type="match status" value="1"/>
</dbReference>
<dbReference type="PRINTS" id="PR01034">
    <property type="entry name" value="RIBOSOMALS12"/>
</dbReference>
<dbReference type="SUPFAM" id="SSF50249">
    <property type="entry name" value="Nucleic acid-binding proteins"/>
    <property type="match status" value="1"/>
</dbReference>
<dbReference type="PROSITE" id="PS00055">
    <property type="entry name" value="RIBOSOMAL_S12"/>
    <property type="match status" value="1"/>
</dbReference>
<keyword id="KW-0488">Methylation</keyword>
<keyword id="KW-1185">Reference proteome</keyword>
<keyword id="KW-0687">Ribonucleoprotein</keyword>
<keyword id="KW-0689">Ribosomal protein</keyword>
<keyword id="KW-0694">RNA-binding</keyword>
<keyword id="KW-0699">rRNA-binding</keyword>
<keyword id="KW-0820">tRNA-binding</keyword>
<name>RS12_CERS4</name>
<feature type="chain" id="PRO_0000226410" description="Small ribosomal subunit protein uS12">
    <location>
        <begin position="1"/>
        <end position="123"/>
    </location>
</feature>
<feature type="region of interest" description="Disordered" evidence="3">
    <location>
        <begin position="1"/>
        <end position="28"/>
    </location>
</feature>
<feature type="modified residue" description="3-methylthioaspartic acid" evidence="1">
    <location>
        <position position="89"/>
    </location>
</feature>
<sequence length="123" mass="14207">MPTIQQLIRKPREPKRVRSKSQHLESCPQKRGVCTRVYTTTPKKPNSAMRKVAKVRLTNGFEVISYIPGEKHNLQEHSVVLIRGGRVKDLPGVRYHILRGVLDTQGVKDRRQRRSKYGAKRPK</sequence>
<comment type="function">
    <text evidence="2">With S4 and S5 plays an important role in translational accuracy.</text>
</comment>
<comment type="function">
    <text evidence="2">Interacts with and stabilizes bases of the 16S rRNA that are involved in tRNA selection in the A site and with the mRNA backbone. Located at the interface of the 30S and 50S subunits, it traverses the body of the 30S subunit contacting proteins on the other side and probably holding the rRNA structure together. The combined cluster of proteins S8, S12 and S17 appears to hold together the shoulder and platform of the 30S subunit.</text>
</comment>
<comment type="subunit">
    <text evidence="2">Part of the 30S ribosomal subunit. Contacts proteins S8 and S17. May interact with IF1 in the 30S initiation complex.</text>
</comment>
<comment type="similarity">
    <text evidence="2">Belongs to the universal ribosomal protein uS12 family.</text>
</comment>
<reference key="1">
    <citation type="submission" date="2005-09" db="EMBL/GenBank/DDBJ databases">
        <title>Complete sequence of chromosome 1 of Rhodobacter sphaeroides 2.4.1.</title>
        <authorList>
            <person name="Copeland A."/>
            <person name="Lucas S."/>
            <person name="Lapidus A."/>
            <person name="Barry K."/>
            <person name="Detter J.C."/>
            <person name="Glavina T."/>
            <person name="Hammon N."/>
            <person name="Israni S."/>
            <person name="Pitluck S."/>
            <person name="Richardson P."/>
            <person name="Mackenzie C."/>
            <person name="Choudhary M."/>
            <person name="Larimer F."/>
            <person name="Hauser L.J."/>
            <person name="Land M."/>
            <person name="Donohue T.J."/>
            <person name="Kaplan S."/>
        </authorList>
    </citation>
    <scope>NUCLEOTIDE SEQUENCE [LARGE SCALE GENOMIC DNA]</scope>
    <source>
        <strain>ATCC 17023 / DSM 158 / JCM 6121 / CCUG 31486 / LMG 2827 / NBRC 12203 / NCIMB 8253 / ATH 2.4.1.</strain>
    </source>
</reference>
<accession>Q3J5S7</accession>